<accession>B8DKD1</accession>
<organism>
    <name type="scientific">Nitratidesulfovibrio vulgaris (strain DSM 19637 / Miyazaki F)</name>
    <name type="common">Desulfovibrio vulgaris</name>
    <dbReference type="NCBI Taxonomy" id="883"/>
    <lineage>
        <taxon>Bacteria</taxon>
        <taxon>Pseudomonadati</taxon>
        <taxon>Thermodesulfobacteriota</taxon>
        <taxon>Desulfovibrionia</taxon>
        <taxon>Desulfovibrionales</taxon>
        <taxon>Desulfovibrionaceae</taxon>
        <taxon>Nitratidesulfovibrio</taxon>
    </lineage>
</organism>
<name>Y1139_NITV9</name>
<dbReference type="EMBL" id="CP001197">
    <property type="protein sequence ID" value="ACL08093.1"/>
    <property type="molecule type" value="Genomic_DNA"/>
</dbReference>
<dbReference type="SMR" id="B8DKD1"/>
<dbReference type="STRING" id="883.DvMF_1139"/>
<dbReference type="KEGG" id="dvm:DvMF_1139"/>
<dbReference type="eggNOG" id="COG2052">
    <property type="taxonomic scope" value="Bacteria"/>
</dbReference>
<dbReference type="HOGENOM" id="CLU_165326_0_0_7"/>
<dbReference type="OrthoDB" id="5432174at2"/>
<dbReference type="HAMAP" id="MF_01503">
    <property type="entry name" value="RemA"/>
    <property type="match status" value="1"/>
</dbReference>
<dbReference type="InterPro" id="IPR007169">
    <property type="entry name" value="RemA-like"/>
</dbReference>
<dbReference type="NCBIfam" id="NF003315">
    <property type="entry name" value="PRK04323.1"/>
    <property type="match status" value="1"/>
</dbReference>
<dbReference type="PANTHER" id="PTHR38449:SF1">
    <property type="entry name" value="REGULATORY PROTEIN SSL2874-RELATED"/>
    <property type="match status" value="1"/>
</dbReference>
<dbReference type="PANTHER" id="PTHR38449">
    <property type="entry name" value="REGULATORY PROTEIN TM_1690-RELATED"/>
    <property type="match status" value="1"/>
</dbReference>
<dbReference type="Pfam" id="PF04025">
    <property type="entry name" value="RemA-like"/>
    <property type="match status" value="1"/>
</dbReference>
<reference key="1">
    <citation type="submission" date="2008-10" db="EMBL/GenBank/DDBJ databases">
        <title>Complete sequence of Desulfovibrio vulgaris str. 'Miyazaki F'.</title>
        <authorList>
            <person name="Lucas S."/>
            <person name="Copeland A."/>
            <person name="Lapidus A."/>
            <person name="Glavina del Rio T."/>
            <person name="Dalin E."/>
            <person name="Tice H."/>
            <person name="Bruce D."/>
            <person name="Goodwin L."/>
            <person name="Pitluck S."/>
            <person name="Sims D."/>
            <person name="Brettin T."/>
            <person name="Detter J.C."/>
            <person name="Han C."/>
            <person name="Larimer F."/>
            <person name="Land M."/>
            <person name="Hauser L."/>
            <person name="Kyrpides N."/>
            <person name="Mikhailova N."/>
            <person name="Hazen T.C."/>
            <person name="Richardson P."/>
        </authorList>
    </citation>
    <scope>NUCLEOTIDE SEQUENCE [LARGE SCALE GENOMIC DNA]</scope>
    <source>
        <strain>DSM 19637 / Miyazaki F</strain>
    </source>
</reference>
<protein>
    <recommendedName>
        <fullName evidence="1">Putative regulatory protein DvMF_1139</fullName>
    </recommendedName>
</protein>
<sequence>MQQKSSSQKLINVGFGNFVVASRVVAIVNPSSSPMRRLREDARQEGRLVDATQGRKTRSIIITDSNHVILSAIQAETVGQRYTQEDAD</sequence>
<proteinExistence type="inferred from homology"/>
<evidence type="ECO:0000255" key="1">
    <source>
        <dbReference type="HAMAP-Rule" id="MF_01503"/>
    </source>
</evidence>
<gene>
    <name type="ordered locus">DvMF_1139</name>
</gene>
<comment type="similarity">
    <text evidence="1">Belongs to the RemA family.</text>
</comment>
<feature type="chain" id="PRO_0000373785" description="Putative regulatory protein DvMF_1139">
    <location>
        <begin position="1"/>
        <end position="88"/>
    </location>
</feature>